<reference key="1">
    <citation type="journal article" date="2011" name="PLoS Genet.">
        <title>Genomic analysis of the necrotrophic fungal pathogens Sclerotinia sclerotiorum and Botrytis cinerea.</title>
        <authorList>
            <person name="Amselem J."/>
            <person name="Cuomo C.A."/>
            <person name="van Kan J.A.L."/>
            <person name="Viaud M."/>
            <person name="Benito E.P."/>
            <person name="Couloux A."/>
            <person name="Coutinho P.M."/>
            <person name="de Vries R.P."/>
            <person name="Dyer P.S."/>
            <person name="Fillinger S."/>
            <person name="Fournier E."/>
            <person name="Gout L."/>
            <person name="Hahn M."/>
            <person name="Kohn L."/>
            <person name="Lapalu N."/>
            <person name="Plummer K.M."/>
            <person name="Pradier J.-M."/>
            <person name="Quevillon E."/>
            <person name="Sharon A."/>
            <person name="Simon A."/>
            <person name="ten Have A."/>
            <person name="Tudzynski B."/>
            <person name="Tudzynski P."/>
            <person name="Wincker P."/>
            <person name="Andrew M."/>
            <person name="Anthouard V."/>
            <person name="Beever R.E."/>
            <person name="Beffa R."/>
            <person name="Benoit I."/>
            <person name="Bouzid O."/>
            <person name="Brault B."/>
            <person name="Chen Z."/>
            <person name="Choquer M."/>
            <person name="Collemare J."/>
            <person name="Cotton P."/>
            <person name="Danchin E.G."/>
            <person name="Da Silva C."/>
            <person name="Gautier A."/>
            <person name="Giraud C."/>
            <person name="Giraud T."/>
            <person name="Gonzalez C."/>
            <person name="Grossetete S."/>
            <person name="Gueldener U."/>
            <person name="Henrissat B."/>
            <person name="Howlett B.J."/>
            <person name="Kodira C."/>
            <person name="Kretschmer M."/>
            <person name="Lappartient A."/>
            <person name="Leroch M."/>
            <person name="Levis C."/>
            <person name="Mauceli E."/>
            <person name="Neuveglise C."/>
            <person name="Oeser B."/>
            <person name="Pearson M."/>
            <person name="Poulain J."/>
            <person name="Poussereau N."/>
            <person name="Quesneville H."/>
            <person name="Rascle C."/>
            <person name="Schumacher J."/>
            <person name="Segurens B."/>
            <person name="Sexton A."/>
            <person name="Silva E."/>
            <person name="Sirven C."/>
            <person name="Soanes D.M."/>
            <person name="Talbot N.J."/>
            <person name="Templeton M."/>
            <person name="Yandava C."/>
            <person name="Yarden O."/>
            <person name="Zeng Q."/>
            <person name="Rollins J.A."/>
            <person name="Lebrun M.-H."/>
            <person name="Dickman M."/>
        </authorList>
    </citation>
    <scope>NUCLEOTIDE SEQUENCE [LARGE SCALE GENOMIC DNA]</scope>
    <source>
        <strain>ATCC 18683 / 1980 / Ss-1</strain>
    </source>
</reference>
<keyword id="KW-0031">Aminopeptidase</keyword>
<keyword id="KW-0325">Glycoprotein</keyword>
<keyword id="KW-0378">Hydrolase</keyword>
<keyword id="KW-0472">Membrane</keyword>
<keyword id="KW-0645">Protease</keyword>
<keyword id="KW-1185">Reference proteome</keyword>
<keyword id="KW-0720">Serine protease</keyword>
<keyword id="KW-0735">Signal-anchor</keyword>
<keyword id="KW-0812">Transmembrane</keyword>
<keyword id="KW-1133">Transmembrane helix</keyword>
<keyword id="KW-0926">Vacuole</keyword>
<comment type="function">
    <text evidence="1">Type IV dipeptidyl-peptidase which removes N-terminal dipeptides sequentially from polypeptides having unsubstituted N-termini provided that the penultimate residue is proline.</text>
</comment>
<comment type="catalytic activity">
    <reaction>
        <text>Release of an N-terminal dipeptide, Xaa-Yaa-|-Zaa-, from a polypeptide, preferentially when Yaa is Pro, provided Zaa is neither Pro nor hydroxyproline.</text>
        <dbReference type="EC" id="3.4.14.5"/>
    </reaction>
</comment>
<comment type="subcellular location">
    <subcellularLocation>
        <location evidence="1">Vacuole membrane</location>
        <topology evidence="1">Single-pass type II membrane protein</topology>
    </subcellularLocation>
    <text evidence="1">Lysosome-like vacuoles.</text>
</comment>
<comment type="similarity">
    <text evidence="4">Belongs to the peptidase S9B family.</text>
</comment>
<name>DAPB_SCLS1</name>
<proteinExistence type="inferred from homology"/>
<dbReference type="EC" id="3.4.14.5"/>
<dbReference type="EMBL" id="CH476630">
    <property type="protein sequence ID" value="EDN91883.1"/>
    <property type="molecule type" value="Genomic_DNA"/>
</dbReference>
<dbReference type="RefSeq" id="XP_001591119.1">
    <property type="nucleotide sequence ID" value="XM_001591069.1"/>
</dbReference>
<dbReference type="SMR" id="A7EQZ1"/>
<dbReference type="FunCoup" id="A7EQZ1">
    <property type="interactions" value="302"/>
</dbReference>
<dbReference type="STRING" id="665079.A7EQZ1"/>
<dbReference type="ESTHER" id="scls1-dapb">
    <property type="family name" value="DPP4N_Peptidase_S9"/>
</dbReference>
<dbReference type="MEROPS" id="S09.006"/>
<dbReference type="GlyCosmos" id="A7EQZ1">
    <property type="glycosylation" value="2 sites, No reported glycans"/>
</dbReference>
<dbReference type="GeneID" id="5487167"/>
<dbReference type="KEGG" id="ssl:SS1G_07744"/>
<dbReference type="VEuPathDB" id="FungiDB:sscle_11g083720"/>
<dbReference type="InParanoid" id="A7EQZ1"/>
<dbReference type="OMA" id="MRTPQEN"/>
<dbReference type="OrthoDB" id="16520at2759"/>
<dbReference type="Proteomes" id="UP000001312">
    <property type="component" value="Unassembled WGS sequence"/>
</dbReference>
<dbReference type="GO" id="GO:0005886">
    <property type="term" value="C:plasma membrane"/>
    <property type="evidence" value="ECO:0000318"/>
    <property type="project" value="GO_Central"/>
</dbReference>
<dbReference type="GO" id="GO:0005774">
    <property type="term" value="C:vacuolar membrane"/>
    <property type="evidence" value="ECO:0007669"/>
    <property type="project" value="UniProtKB-SubCell"/>
</dbReference>
<dbReference type="GO" id="GO:0004177">
    <property type="term" value="F:aminopeptidase activity"/>
    <property type="evidence" value="ECO:0007669"/>
    <property type="project" value="UniProtKB-KW"/>
</dbReference>
<dbReference type="GO" id="GO:0008239">
    <property type="term" value="F:dipeptidyl-peptidase activity"/>
    <property type="evidence" value="ECO:0000318"/>
    <property type="project" value="GO_Central"/>
</dbReference>
<dbReference type="GO" id="GO:0008236">
    <property type="term" value="F:serine-type peptidase activity"/>
    <property type="evidence" value="ECO:0007669"/>
    <property type="project" value="UniProtKB-KW"/>
</dbReference>
<dbReference type="GO" id="GO:0006508">
    <property type="term" value="P:proteolysis"/>
    <property type="evidence" value="ECO:0000318"/>
    <property type="project" value="GO_Central"/>
</dbReference>
<dbReference type="FunFam" id="3.40.50.1820:FF:000003">
    <property type="entry name" value="Dipeptidyl peptidase 4"/>
    <property type="match status" value="1"/>
</dbReference>
<dbReference type="Gene3D" id="3.40.50.1820">
    <property type="entry name" value="alpha/beta hydrolase"/>
    <property type="match status" value="1"/>
</dbReference>
<dbReference type="Gene3D" id="2.140.10.30">
    <property type="entry name" value="Dipeptidylpeptidase IV, N-terminal domain"/>
    <property type="match status" value="1"/>
</dbReference>
<dbReference type="InterPro" id="IPR029058">
    <property type="entry name" value="AB_hydrolase_fold"/>
</dbReference>
<dbReference type="InterPro" id="IPR001375">
    <property type="entry name" value="Peptidase_S9_cat"/>
</dbReference>
<dbReference type="InterPro" id="IPR002469">
    <property type="entry name" value="Peptidase_S9B_N"/>
</dbReference>
<dbReference type="InterPro" id="IPR050278">
    <property type="entry name" value="Serine_Prot_S9B/DPPIV"/>
</dbReference>
<dbReference type="PANTHER" id="PTHR11731:SF200">
    <property type="entry name" value="DIPEPTIDYL PEPTIDASE 10, ISOFORM B"/>
    <property type="match status" value="1"/>
</dbReference>
<dbReference type="PANTHER" id="PTHR11731">
    <property type="entry name" value="PROTEASE FAMILY S9B,C DIPEPTIDYL-PEPTIDASE IV-RELATED"/>
    <property type="match status" value="1"/>
</dbReference>
<dbReference type="Pfam" id="PF00930">
    <property type="entry name" value="DPPIV_N"/>
    <property type="match status" value="1"/>
</dbReference>
<dbReference type="Pfam" id="PF00326">
    <property type="entry name" value="Peptidase_S9"/>
    <property type="match status" value="1"/>
</dbReference>
<dbReference type="SUPFAM" id="SSF53474">
    <property type="entry name" value="alpha/beta-Hydrolases"/>
    <property type="match status" value="1"/>
</dbReference>
<dbReference type="SUPFAM" id="SSF82171">
    <property type="entry name" value="DPP6 N-terminal domain-like"/>
    <property type="match status" value="1"/>
</dbReference>
<feature type="chain" id="PRO_0000412162" description="Probable dipeptidyl-aminopeptidase B">
    <location>
        <begin position="1"/>
        <end position="921"/>
    </location>
</feature>
<feature type="topological domain" description="Cytoplasmic" evidence="2">
    <location>
        <begin position="1"/>
        <end position="109"/>
    </location>
</feature>
<feature type="transmembrane region" description="Helical; Signal-anchor for type II membrane protein" evidence="2">
    <location>
        <begin position="110"/>
        <end position="130"/>
    </location>
</feature>
<feature type="topological domain" description="Vacuolar" evidence="2">
    <location>
        <begin position="131"/>
        <end position="921"/>
    </location>
</feature>
<feature type="region of interest" description="Disordered" evidence="3">
    <location>
        <begin position="1"/>
        <end position="33"/>
    </location>
</feature>
<feature type="compositionally biased region" description="Polar residues" evidence="3">
    <location>
        <begin position="8"/>
        <end position="17"/>
    </location>
</feature>
<feature type="active site" description="Charge relay system" evidence="1">
    <location>
        <position position="768"/>
    </location>
</feature>
<feature type="active site" description="Charge relay system" evidence="1">
    <location>
        <position position="845"/>
    </location>
</feature>
<feature type="active site" description="Charge relay system" evidence="1">
    <location>
        <position position="878"/>
    </location>
</feature>
<feature type="glycosylation site" description="N-linked (GlcNAc...) asparagine" evidence="2">
    <location>
        <position position="362"/>
    </location>
</feature>
<feature type="glycosylation site" description="N-linked (GlcNAc...) asparagine" evidence="2">
    <location>
        <position position="822"/>
    </location>
</feature>
<evidence type="ECO:0000250" key="1"/>
<evidence type="ECO:0000255" key="2"/>
<evidence type="ECO:0000256" key="3">
    <source>
        <dbReference type="SAM" id="MobiDB-lite"/>
    </source>
</evidence>
<evidence type="ECO:0000305" key="4"/>
<sequence>MAGHTEENAQLLSTEQESVSRHSSDSAASTASTTSLVFDRIGERVAANRSEKSMMVTPKFPPRGEMAYADDEHTQIHLDEEEEKDYDLEDSAFLTNGATNKSVDKKLRKLIWIVGGVFIGAWVLALFIFLGKQAYKHSSEIPHDPQATSSRGNGKKVTMDQVMGGQWRATKHSISWIAGANGEDGLLLEQGSAGKDYLIVEDVRTQNPETVGTLDRMTLMKDGSFTVAGRSLYPSKVYPSKDLKKVLVATDVQSNWRHSFYAKYWIFDVESQTAEPLDPVDLDGRVQLASWSPKSDAIVFTRDNNMYLRKLSSPTVIQITTDGGPEFFYGVPDWVYEEEVFAGASATWWDDSGKYIAFLRTNESEVPEYPIQYFVSRPSGKEPLPGEENYPEVREIKYPKAGAPNPTVDLLFYDIFKAEVFEVTIAGGFEPKNLLITEVVWAGSTGKALIRETNRESDILRVVLVDVVAREGKTVRYTDINKLDGGWFEVSEDTRYIPADPANGRPHDGYIDTIIHENYDHLGYFTPMDNPEPILLTSGNWEVVQAPSAVDLKNNLVYFVSTKESPITRQVYSVKLDGTDMKAITDTSNEGYYGASFSKGAGYVLLNYNGPGIPWQKVISTPSNGNQYTHTIEENKGLAEMAKKHDLPILIYQTVTIDGFELQVVERRPPHFNPKKKYPVLFYLYGGPGSQTVSKSFNVDFESYIASNLGYIVVTVDGRGTGFIGRKARTIIRGNIGHYEARDQIETAKIWASKKYVDASRMAIWGWSYGGFMTLKTLEEDAGETFSYGMAVAPVTDWRFYDSIYTERYMHTPQHNPGGYDNTSISNVEALSKNVRFLVMHGVADDNVHMQNTLTLLDKLDLAGVENYDVHVFPDSDHSIYFHNANRIVYDKLNNWLINAFNGEWLRTANAVPLQIDAAKV</sequence>
<organism>
    <name type="scientific">Sclerotinia sclerotiorum (strain ATCC 18683 / 1980 / Ss-1)</name>
    <name type="common">White mold</name>
    <name type="synonym">Whetzelinia sclerotiorum</name>
    <dbReference type="NCBI Taxonomy" id="665079"/>
    <lineage>
        <taxon>Eukaryota</taxon>
        <taxon>Fungi</taxon>
        <taxon>Dikarya</taxon>
        <taxon>Ascomycota</taxon>
        <taxon>Pezizomycotina</taxon>
        <taxon>Leotiomycetes</taxon>
        <taxon>Helotiales</taxon>
        <taxon>Sclerotiniaceae</taxon>
        <taxon>Sclerotinia</taxon>
    </lineage>
</organism>
<gene>
    <name type="primary">dapB</name>
    <name type="ORF">SS1G_07744</name>
</gene>
<protein>
    <recommendedName>
        <fullName>Probable dipeptidyl-aminopeptidase B</fullName>
        <shortName>DPAP B</shortName>
        <ecNumber>3.4.14.5</ecNumber>
    </recommendedName>
</protein>
<accession>A7EQZ1</accession>